<organism>
    <name type="scientific">Arabidopsis thaliana</name>
    <name type="common">Mouse-ear cress</name>
    <dbReference type="NCBI Taxonomy" id="3702"/>
    <lineage>
        <taxon>Eukaryota</taxon>
        <taxon>Viridiplantae</taxon>
        <taxon>Streptophyta</taxon>
        <taxon>Embryophyta</taxon>
        <taxon>Tracheophyta</taxon>
        <taxon>Spermatophyta</taxon>
        <taxon>Magnoliopsida</taxon>
        <taxon>eudicotyledons</taxon>
        <taxon>Gunneridae</taxon>
        <taxon>Pentapetalae</taxon>
        <taxon>rosids</taxon>
        <taxon>malvids</taxon>
        <taxon>Brassicales</taxon>
        <taxon>Brassicaceae</taxon>
        <taxon>Camelineae</taxon>
        <taxon>Arabidopsis</taxon>
    </lineage>
</organism>
<gene>
    <name evidence="6" type="ordered locus">At5g58730</name>
    <name evidence="7" type="ORF">MZN1.17</name>
</gene>
<name>MIK_ARATH</name>
<feature type="chain" id="PRO_0000431868" description="Inositol 3-kinase">
    <location>
        <begin position="1"/>
        <end position="353"/>
    </location>
</feature>
<feature type="active site" description="Proton acceptor" evidence="1">
    <location>
        <position position="250"/>
    </location>
</feature>
<feature type="binding site" evidence="1">
    <location>
        <position position="197"/>
    </location>
    <ligand>
        <name>ATP</name>
        <dbReference type="ChEBI" id="CHEBI:30616"/>
    </ligand>
</feature>
<feature type="binding site" evidence="1">
    <location>
        <begin position="247"/>
        <end position="250"/>
    </location>
    <ligand>
        <name>ATP</name>
        <dbReference type="ChEBI" id="CHEBI:30616"/>
    </ligand>
</feature>
<feature type="binding site" evidence="1">
    <location>
        <position position="274"/>
    </location>
    <ligand>
        <name>ATP</name>
        <dbReference type="ChEBI" id="CHEBI:30616"/>
    </ligand>
</feature>
<sequence length="353" mass="38646">MTLNPPPSQQTSHSPRRIPNRRVLIVGNYCHDVLIQNGSVVAETLGGAASFISNVLDSSSVSCDLVSKVGHDFRYEVTHSPIVAPEKETTVFEAYFDLGIDGIGHADRVLKRVSACDPILPSDIPDSRFDFGMAVGVGGEILPETLEKMVEICDVVAVDIQALIRVFDPVDGAVKLVDLKESGFYHILHRIGFLKASSDEALFMDVEQMKHLCCVVVTNGEKGCRIYHKDDEMTVPPFLAKQVDPTGAGDSFLGGLIVGLVEGLTVPDAALLGNLFGSITVEHIGQPKFDLMMLQKVKDEVQRRKKQCNISSSHNNDHNEFHERLSPARFSCVDSQLQPKLLVNGHSCDDRSL</sequence>
<dbReference type="EC" id="2.7.1.64" evidence="2"/>
<dbReference type="EMBL" id="AB020755">
    <property type="protein sequence ID" value="BAA97341.1"/>
    <property type="status" value="ALT_SEQ"/>
    <property type="molecule type" value="Genomic_DNA"/>
</dbReference>
<dbReference type="EMBL" id="CP002688">
    <property type="protein sequence ID" value="AED97092.1"/>
    <property type="molecule type" value="Genomic_DNA"/>
</dbReference>
<dbReference type="EMBL" id="AY058873">
    <property type="protein sequence ID" value="AAL24260.1"/>
    <property type="molecule type" value="mRNA"/>
</dbReference>
<dbReference type="EMBL" id="AY103302">
    <property type="protein sequence ID" value="AAM65354.1"/>
    <property type="molecule type" value="mRNA"/>
</dbReference>
<dbReference type="EMBL" id="AY084481">
    <property type="protein sequence ID" value="AAM61052.1"/>
    <property type="molecule type" value="mRNA"/>
</dbReference>
<dbReference type="RefSeq" id="NP_200681.1">
    <property type="nucleotide sequence ID" value="NM_125260.3"/>
</dbReference>
<dbReference type="SMR" id="Q93Z01"/>
<dbReference type="FunCoup" id="Q93Z01">
    <property type="interactions" value="81"/>
</dbReference>
<dbReference type="IntAct" id="Q93Z01">
    <property type="interactions" value="1"/>
</dbReference>
<dbReference type="STRING" id="3702.Q93Z01"/>
<dbReference type="iPTMnet" id="Q93Z01"/>
<dbReference type="PaxDb" id="3702-AT5G58730.1"/>
<dbReference type="ProteomicsDB" id="238291"/>
<dbReference type="EnsemblPlants" id="AT5G58730.1">
    <property type="protein sequence ID" value="AT5G58730.1"/>
    <property type="gene ID" value="AT5G58730"/>
</dbReference>
<dbReference type="GeneID" id="835987"/>
<dbReference type="Gramene" id="AT5G58730.1">
    <property type="protein sequence ID" value="AT5G58730.1"/>
    <property type="gene ID" value="AT5G58730"/>
</dbReference>
<dbReference type="KEGG" id="ath:AT5G58730"/>
<dbReference type="Araport" id="AT5G58730"/>
<dbReference type="TAIR" id="AT5G58730">
    <property type="gene designation" value="MIK"/>
</dbReference>
<dbReference type="eggNOG" id="KOG2855">
    <property type="taxonomic scope" value="Eukaryota"/>
</dbReference>
<dbReference type="HOGENOM" id="CLU_061466_0_0_1"/>
<dbReference type="InParanoid" id="Q93Z01"/>
<dbReference type="OMA" id="QHFGSHE"/>
<dbReference type="OrthoDB" id="497927at2759"/>
<dbReference type="PhylomeDB" id="Q93Z01"/>
<dbReference type="BioCyc" id="ARA:AT5G58730-MONOMER"/>
<dbReference type="PRO" id="PR:Q93Z01"/>
<dbReference type="Proteomes" id="UP000006548">
    <property type="component" value="Chromosome 5"/>
</dbReference>
<dbReference type="ExpressionAtlas" id="Q93Z01">
    <property type="expression patterns" value="baseline and differential"/>
</dbReference>
<dbReference type="GO" id="GO:0005524">
    <property type="term" value="F:ATP binding"/>
    <property type="evidence" value="ECO:0007669"/>
    <property type="project" value="UniProtKB-KW"/>
</dbReference>
<dbReference type="GO" id="GO:0019140">
    <property type="term" value="F:inositol 3-kinase activity"/>
    <property type="evidence" value="ECO:0000250"/>
    <property type="project" value="UniProtKB"/>
</dbReference>
<dbReference type="GO" id="GO:0010264">
    <property type="term" value="P:myo-inositol hexakisphosphate biosynthetic process"/>
    <property type="evidence" value="ECO:0000315"/>
    <property type="project" value="TAIR"/>
</dbReference>
<dbReference type="FunFam" id="3.40.1190.20:FF:000026">
    <property type="entry name" value="Inositol 3-kinase"/>
    <property type="match status" value="1"/>
</dbReference>
<dbReference type="Gene3D" id="3.40.1190.20">
    <property type="match status" value="1"/>
</dbReference>
<dbReference type="InterPro" id="IPR002173">
    <property type="entry name" value="Carboh/pur_kinase_PfkB_CS"/>
</dbReference>
<dbReference type="InterPro" id="IPR050306">
    <property type="entry name" value="PfkB_Carbo_kinase"/>
</dbReference>
<dbReference type="InterPro" id="IPR011611">
    <property type="entry name" value="PfkB_dom"/>
</dbReference>
<dbReference type="InterPro" id="IPR029056">
    <property type="entry name" value="Ribokinase-like"/>
</dbReference>
<dbReference type="PANTHER" id="PTHR43085">
    <property type="entry name" value="HEXOKINASE FAMILY MEMBER"/>
    <property type="match status" value="1"/>
</dbReference>
<dbReference type="PANTHER" id="PTHR43085:SF13">
    <property type="entry name" value="INOSITOL 3-KINASE"/>
    <property type="match status" value="1"/>
</dbReference>
<dbReference type="Pfam" id="PF00294">
    <property type="entry name" value="PfkB"/>
    <property type="match status" value="1"/>
</dbReference>
<dbReference type="SUPFAM" id="SSF53613">
    <property type="entry name" value="Ribokinase-like"/>
    <property type="match status" value="1"/>
</dbReference>
<dbReference type="PROSITE" id="PS00584">
    <property type="entry name" value="PFKB_KINASES_2"/>
    <property type="match status" value="1"/>
</dbReference>
<keyword id="KW-0067">ATP-binding</keyword>
<keyword id="KW-0418">Kinase</keyword>
<keyword id="KW-0547">Nucleotide-binding</keyword>
<keyword id="KW-1185">Reference proteome</keyword>
<keyword id="KW-0808">Transferase</keyword>
<comment type="function">
    <text evidence="3">Kinase that phosphorylates myo-inositol to produce multiple myo-inositol monophosphates. Participates in phytic acid biosynthesis in developing seeds. Phytic acid is the primary storage form of phosphorus in cereal grains and other plant seeds.</text>
</comment>
<comment type="catalytic activity">
    <reaction evidence="2">
        <text>myo-inositol + ATP = 1D-myo-inositol 3-phosphate + ADP + H(+)</text>
        <dbReference type="Rhea" id="RHEA:21804"/>
        <dbReference type="ChEBI" id="CHEBI:15378"/>
        <dbReference type="ChEBI" id="CHEBI:17268"/>
        <dbReference type="ChEBI" id="CHEBI:30616"/>
        <dbReference type="ChEBI" id="CHEBI:58401"/>
        <dbReference type="ChEBI" id="CHEBI:456216"/>
        <dbReference type="EC" id="2.7.1.64"/>
    </reaction>
</comment>
<comment type="disruption phenotype">
    <text evidence="3">Low inositol hexakisphosphate (phytate) levels in seed tissue.</text>
</comment>
<comment type="similarity">
    <text evidence="5">Belongs to the carbohydrate kinase pfkB family.</text>
</comment>
<comment type="sequence caution" evidence="5">
    <conflict type="erroneous gene model prediction">
        <sequence resource="EMBL-CDS" id="BAA97341"/>
    </conflict>
</comment>
<protein>
    <recommendedName>
        <fullName evidence="5">Inositol 3-kinase</fullName>
        <ecNumber evidence="2">2.7.1.64</ecNumber>
    </recommendedName>
    <alternativeName>
        <fullName evidence="5">Myo-inositol kinase</fullName>
        <shortName evidence="4">AtMIK</shortName>
    </alternativeName>
</protein>
<reference key="1">
    <citation type="journal article" date="2000" name="DNA Res.">
        <title>Structural analysis of Arabidopsis thaliana chromosome 5. X. Sequence features of the regions of 3,076,755 bp covered by sixty P1 and TAC clones.</title>
        <authorList>
            <person name="Sato S."/>
            <person name="Nakamura Y."/>
            <person name="Kaneko T."/>
            <person name="Katoh T."/>
            <person name="Asamizu E."/>
            <person name="Kotani H."/>
            <person name="Tabata S."/>
        </authorList>
    </citation>
    <scope>NUCLEOTIDE SEQUENCE [LARGE SCALE GENOMIC DNA]</scope>
    <source>
        <strain>cv. Columbia</strain>
    </source>
</reference>
<reference key="2">
    <citation type="journal article" date="2017" name="Plant J.">
        <title>Araport11: a complete reannotation of the Arabidopsis thaliana reference genome.</title>
        <authorList>
            <person name="Cheng C.Y."/>
            <person name="Krishnakumar V."/>
            <person name="Chan A.P."/>
            <person name="Thibaud-Nissen F."/>
            <person name="Schobel S."/>
            <person name="Town C.D."/>
        </authorList>
    </citation>
    <scope>GENOME REANNOTATION</scope>
    <source>
        <strain>cv. Columbia</strain>
    </source>
</reference>
<reference key="3">
    <citation type="journal article" date="2003" name="Science">
        <title>Empirical analysis of transcriptional activity in the Arabidopsis genome.</title>
        <authorList>
            <person name="Yamada K."/>
            <person name="Lim J."/>
            <person name="Dale J.M."/>
            <person name="Chen H."/>
            <person name="Shinn P."/>
            <person name="Palm C.J."/>
            <person name="Southwick A.M."/>
            <person name="Wu H.C."/>
            <person name="Kim C.J."/>
            <person name="Nguyen M."/>
            <person name="Pham P.K."/>
            <person name="Cheuk R.F."/>
            <person name="Karlin-Newmann G."/>
            <person name="Liu S.X."/>
            <person name="Lam B."/>
            <person name="Sakano H."/>
            <person name="Wu T."/>
            <person name="Yu G."/>
            <person name="Miranda M."/>
            <person name="Quach H.L."/>
            <person name="Tripp M."/>
            <person name="Chang C.H."/>
            <person name="Lee J.M."/>
            <person name="Toriumi M.J."/>
            <person name="Chan M.M."/>
            <person name="Tang C.C."/>
            <person name="Onodera C.S."/>
            <person name="Deng J.M."/>
            <person name="Akiyama K."/>
            <person name="Ansari Y."/>
            <person name="Arakawa T."/>
            <person name="Banh J."/>
            <person name="Banno F."/>
            <person name="Bowser L."/>
            <person name="Brooks S.Y."/>
            <person name="Carninci P."/>
            <person name="Chao Q."/>
            <person name="Choy N."/>
            <person name="Enju A."/>
            <person name="Goldsmith A.D."/>
            <person name="Gurjal M."/>
            <person name="Hansen N.F."/>
            <person name="Hayashizaki Y."/>
            <person name="Johnson-Hopson C."/>
            <person name="Hsuan V.W."/>
            <person name="Iida K."/>
            <person name="Karnes M."/>
            <person name="Khan S."/>
            <person name="Koesema E."/>
            <person name="Ishida J."/>
            <person name="Jiang P.X."/>
            <person name="Jones T."/>
            <person name="Kawai J."/>
            <person name="Kamiya A."/>
            <person name="Meyers C."/>
            <person name="Nakajima M."/>
            <person name="Narusaka M."/>
            <person name="Seki M."/>
            <person name="Sakurai T."/>
            <person name="Satou M."/>
            <person name="Tamse R."/>
            <person name="Vaysberg M."/>
            <person name="Wallender E.K."/>
            <person name="Wong C."/>
            <person name="Yamamura Y."/>
            <person name="Yuan S."/>
            <person name="Shinozaki K."/>
            <person name="Davis R.W."/>
            <person name="Theologis A."/>
            <person name="Ecker J.R."/>
        </authorList>
    </citation>
    <scope>NUCLEOTIDE SEQUENCE [LARGE SCALE MRNA]</scope>
    <source>
        <strain>cv. Columbia</strain>
    </source>
</reference>
<reference key="4">
    <citation type="submission" date="2002-03" db="EMBL/GenBank/DDBJ databases">
        <title>Full-length cDNA from Arabidopsis thaliana.</title>
        <authorList>
            <person name="Brover V.V."/>
            <person name="Troukhan M.E."/>
            <person name="Alexandrov N.A."/>
            <person name="Lu Y.-P."/>
            <person name="Flavell R.B."/>
            <person name="Feldmann K.A."/>
        </authorList>
    </citation>
    <scope>NUCLEOTIDE SEQUENCE [LARGE SCALE MRNA]</scope>
</reference>
<reference key="5">
    <citation type="journal article" date="2011" name="Mol. Genet. Genomics">
        <title>Identification of genes necessary for wild-type levels of seed phytic acid in Arabidopsis thaliana using a reverse genetics approach.</title>
        <authorList>
            <person name="Kim S.I."/>
            <person name="Tai T.H."/>
        </authorList>
    </citation>
    <scope>FUNCTION</scope>
    <scope>DISRUPTION PHENOTYPE</scope>
</reference>
<evidence type="ECO:0000250" key="1">
    <source>
        <dbReference type="UniProtKB" id="Q53W83"/>
    </source>
</evidence>
<evidence type="ECO:0000250" key="2">
    <source>
        <dbReference type="UniProtKB" id="Q5GA22"/>
    </source>
</evidence>
<evidence type="ECO:0000269" key="3">
    <source>
    </source>
</evidence>
<evidence type="ECO:0000303" key="4">
    <source>
    </source>
</evidence>
<evidence type="ECO:0000305" key="5"/>
<evidence type="ECO:0000312" key="6">
    <source>
        <dbReference type="Araport" id="AT5G58730"/>
    </source>
</evidence>
<evidence type="ECO:0000312" key="7">
    <source>
        <dbReference type="EMBL" id="BAA97341.1"/>
    </source>
</evidence>
<accession>Q93Z01</accession>
<accession>Q9LUY8</accession>
<proteinExistence type="evidence at transcript level"/>